<reference key="1">
    <citation type="submission" date="2006-03" db="EMBL/GenBank/DDBJ databases">
        <title>Complete sequence of Methylobacillus flagellatus KT.</title>
        <authorList>
            <consortium name="US DOE Joint Genome Institute"/>
            <person name="Copeland A."/>
            <person name="Lucas S."/>
            <person name="Lapidus A."/>
            <person name="Barry K."/>
            <person name="Detter J.C."/>
            <person name="Glavina del Rio T."/>
            <person name="Hammon N."/>
            <person name="Israni S."/>
            <person name="Dalin E."/>
            <person name="Tice H."/>
            <person name="Pitluck S."/>
            <person name="Brettin T."/>
            <person name="Bruce D."/>
            <person name="Han C."/>
            <person name="Tapia R."/>
            <person name="Saunders E."/>
            <person name="Gilna P."/>
            <person name="Schmutz J."/>
            <person name="Larimer F."/>
            <person name="Land M."/>
            <person name="Kyrpides N."/>
            <person name="Anderson I."/>
            <person name="Richardson P."/>
        </authorList>
    </citation>
    <scope>NUCLEOTIDE SEQUENCE [LARGE SCALE GENOMIC DNA]</scope>
    <source>
        <strain>ATCC 51484 / DSM 6875 / VKM B-1610 / KT</strain>
    </source>
</reference>
<evidence type="ECO:0000255" key="1">
    <source>
        <dbReference type="HAMAP-Rule" id="MF_00083"/>
    </source>
</evidence>
<evidence type="ECO:0000305" key="2"/>
<keyword id="KW-0963">Cytoplasm</keyword>
<keyword id="KW-0378">Hydrolase</keyword>
<keyword id="KW-1185">Reference proteome</keyword>
<keyword id="KW-0694">RNA-binding</keyword>
<keyword id="KW-0820">tRNA-binding</keyword>
<accession>Q1H3J3</accession>
<gene>
    <name evidence="1" type="primary">pth</name>
    <name type="ordered locus">Mfla_0676</name>
</gene>
<protein>
    <recommendedName>
        <fullName evidence="1">Peptidyl-tRNA hydrolase</fullName>
        <shortName evidence="1">Pth</shortName>
        <ecNumber evidence="1">3.1.1.29</ecNumber>
    </recommendedName>
</protein>
<comment type="function">
    <text evidence="1">Hydrolyzes ribosome-free peptidyl-tRNAs (with 1 or more amino acids incorporated), which drop off the ribosome during protein synthesis, or as a result of ribosome stalling.</text>
</comment>
<comment type="function">
    <text evidence="1">Catalyzes the release of premature peptidyl moieties from peptidyl-tRNA molecules trapped in stalled 50S ribosomal subunits, and thus maintains levels of free tRNAs and 50S ribosomes.</text>
</comment>
<comment type="catalytic activity">
    <reaction evidence="1">
        <text>an N-acyl-L-alpha-aminoacyl-tRNA + H2O = an N-acyl-L-amino acid + a tRNA + H(+)</text>
        <dbReference type="Rhea" id="RHEA:54448"/>
        <dbReference type="Rhea" id="RHEA-COMP:10123"/>
        <dbReference type="Rhea" id="RHEA-COMP:13883"/>
        <dbReference type="ChEBI" id="CHEBI:15377"/>
        <dbReference type="ChEBI" id="CHEBI:15378"/>
        <dbReference type="ChEBI" id="CHEBI:59874"/>
        <dbReference type="ChEBI" id="CHEBI:78442"/>
        <dbReference type="ChEBI" id="CHEBI:138191"/>
        <dbReference type="EC" id="3.1.1.29"/>
    </reaction>
</comment>
<comment type="subunit">
    <text evidence="1">Monomer.</text>
</comment>
<comment type="subcellular location">
    <subcellularLocation>
        <location evidence="1">Cytoplasm</location>
    </subcellularLocation>
</comment>
<comment type="similarity">
    <text evidence="1">Belongs to the PTH family.</text>
</comment>
<comment type="sequence caution" evidence="2">
    <conflict type="erroneous initiation">
        <sequence resource="EMBL-CDS" id="ABE48944"/>
    </conflict>
    <text>Extended N-terminus.</text>
</comment>
<sequence length="192" mass="21124">MNGIRLFVGLGNPGAQYEDTRHNAGFWWIDQLCAQTASKTTLEAKFFGLSGRLNGHADTWLLKPTTFMNASGRAVAALARFYKIPAEQILVVHDELDLPPGAARLKKGGGHSGHNGLKDIAAQLGTNDFWRLRLGIGHPGDRSAVVNYVLNAPLRDEMQQIAYAMDDSMLVLPQLLEGKFEEAMLKLHTKTK</sequence>
<proteinExistence type="inferred from homology"/>
<name>PTH_METFK</name>
<feature type="chain" id="PRO_0000264057" description="Peptidyl-tRNA hydrolase">
    <location>
        <begin position="1"/>
        <end position="192"/>
    </location>
</feature>
<feature type="active site" description="Proton acceptor" evidence="1">
    <location>
        <position position="22"/>
    </location>
</feature>
<feature type="binding site" evidence="1">
    <location>
        <position position="17"/>
    </location>
    <ligand>
        <name>tRNA</name>
        <dbReference type="ChEBI" id="CHEBI:17843"/>
    </ligand>
</feature>
<feature type="binding site" evidence="1">
    <location>
        <position position="67"/>
    </location>
    <ligand>
        <name>tRNA</name>
        <dbReference type="ChEBI" id="CHEBI:17843"/>
    </ligand>
</feature>
<feature type="binding site" evidence="1">
    <location>
        <position position="69"/>
    </location>
    <ligand>
        <name>tRNA</name>
        <dbReference type="ChEBI" id="CHEBI:17843"/>
    </ligand>
</feature>
<feature type="binding site" evidence="1">
    <location>
        <position position="115"/>
    </location>
    <ligand>
        <name>tRNA</name>
        <dbReference type="ChEBI" id="CHEBI:17843"/>
    </ligand>
</feature>
<feature type="site" description="Discriminates between blocked and unblocked aminoacyl-tRNA" evidence="1">
    <location>
        <position position="12"/>
    </location>
</feature>
<feature type="site" description="Stabilizes the basic form of H active site to accept a proton" evidence="1">
    <location>
        <position position="94"/>
    </location>
</feature>
<organism>
    <name type="scientific">Methylobacillus flagellatus (strain ATCC 51484 / DSM 6875 / VKM B-1610 / KT)</name>
    <dbReference type="NCBI Taxonomy" id="265072"/>
    <lineage>
        <taxon>Bacteria</taxon>
        <taxon>Pseudomonadati</taxon>
        <taxon>Pseudomonadota</taxon>
        <taxon>Betaproteobacteria</taxon>
        <taxon>Nitrosomonadales</taxon>
        <taxon>Methylophilaceae</taxon>
        <taxon>Methylobacillus</taxon>
    </lineage>
</organism>
<dbReference type="EC" id="3.1.1.29" evidence="1"/>
<dbReference type="EMBL" id="CP000284">
    <property type="protein sequence ID" value="ABE48944.1"/>
    <property type="status" value="ALT_INIT"/>
    <property type="molecule type" value="Genomic_DNA"/>
</dbReference>
<dbReference type="RefSeq" id="WP_048811835.1">
    <property type="nucleotide sequence ID" value="NC_007947.1"/>
</dbReference>
<dbReference type="SMR" id="Q1H3J3"/>
<dbReference type="STRING" id="265072.Mfla_0676"/>
<dbReference type="KEGG" id="mfa:Mfla_0676"/>
<dbReference type="eggNOG" id="COG0193">
    <property type="taxonomic scope" value="Bacteria"/>
</dbReference>
<dbReference type="HOGENOM" id="CLU_062456_3_1_4"/>
<dbReference type="OrthoDB" id="9800507at2"/>
<dbReference type="Proteomes" id="UP000002440">
    <property type="component" value="Chromosome"/>
</dbReference>
<dbReference type="GO" id="GO:0005737">
    <property type="term" value="C:cytoplasm"/>
    <property type="evidence" value="ECO:0007669"/>
    <property type="project" value="UniProtKB-SubCell"/>
</dbReference>
<dbReference type="GO" id="GO:0004045">
    <property type="term" value="F:peptidyl-tRNA hydrolase activity"/>
    <property type="evidence" value="ECO:0007669"/>
    <property type="project" value="UniProtKB-UniRule"/>
</dbReference>
<dbReference type="GO" id="GO:0000049">
    <property type="term" value="F:tRNA binding"/>
    <property type="evidence" value="ECO:0007669"/>
    <property type="project" value="UniProtKB-UniRule"/>
</dbReference>
<dbReference type="GO" id="GO:0006515">
    <property type="term" value="P:protein quality control for misfolded or incompletely synthesized proteins"/>
    <property type="evidence" value="ECO:0007669"/>
    <property type="project" value="UniProtKB-UniRule"/>
</dbReference>
<dbReference type="GO" id="GO:0072344">
    <property type="term" value="P:rescue of stalled ribosome"/>
    <property type="evidence" value="ECO:0007669"/>
    <property type="project" value="UniProtKB-UniRule"/>
</dbReference>
<dbReference type="CDD" id="cd00462">
    <property type="entry name" value="PTH"/>
    <property type="match status" value="1"/>
</dbReference>
<dbReference type="FunFam" id="3.40.50.1470:FF:000001">
    <property type="entry name" value="Peptidyl-tRNA hydrolase"/>
    <property type="match status" value="1"/>
</dbReference>
<dbReference type="Gene3D" id="3.40.50.1470">
    <property type="entry name" value="Peptidyl-tRNA hydrolase"/>
    <property type="match status" value="1"/>
</dbReference>
<dbReference type="HAMAP" id="MF_00083">
    <property type="entry name" value="Pept_tRNA_hydro_bact"/>
    <property type="match status" value="1"/>
</dbReference>
<dbReference type="InterPro" id="IPR001328">
    <property type="entry name" value="Pept_tRNA_hydro"/>
</dbReference>
<dbReference type="InterPro" id="IPR018171">
    <property type="entry name" value="Pept_tRNA_hydro_CS"/>
</dbReference>
<dbReference type="InterPro" id="IPR036416">
    <property type="entry name" value="Pept_tRNA_hydro_sf"/>
</dbReference>
<dbReference type="NCBIfam" id="TIGR00447">
    <property type="entry name" value="pth"/>
    <property type="match status" value="1"/>
</dbReference>
<dbReference type="PANTHER" id="PTHR17224">
    <property type="entry name" value="PEPTIDYL-TRNA HYDROLASE"/>
    <property type="match status" value="1"/>
</dbReference>
<dbReference type="PANTHER" id="PTHR17224:SF1">
    <property type="entry name" value="PEPTIDYL-TRNA HYDROLASE"/>
    <property type="match status" value="1"/>
</dbReference>
<dbReference type="Pfam" id="PF01195">
    <property type="entry name" value="Pept_tRNA_hydro"/>
    <property type="match status" value="1"/>
</dbReference>
<dbReference type="SUPFAM" id="SSF53178">
    <property type="entry name" value="Peptidyl-tRNA hydrolase-like"/>
    <property type="match status" value="1"/>
</dbReference>
<dbReference type="PROSITE" id="PS01196">
    <property type="entry name" value="PEPT_TRNA_HYDROL_2"/>
    <property type="match status" value="1"/>
</dbReference>